<proteinExistence type="inferred from homology"/>
<sequence>MTRLSSGGRIEVICGCMFSGKTEELIRRLNHVRLARQRLIAFTPRRDTRYRLGSLVSHNGLSVEARVIDSIRDTPAHLNTDIHVVAVDELHLLDDPPDAAREVCQDLADRGLRVIVAGLDQDFRAQPFPAMAQLMAVAEQVDKLYAICVRCGAYATRSQRLIDGKPAPADAPTIVVGGQELYEARCRACYEPAR</sequence>
<comment type="catalytic activity">
    <reaction evidence="1">
        <text>thymidine + ATP = dTMP + ADP + H(+)</text>
        <dbReference type="Rhea" id="RHEA:19129"/>
        <dbReference type="ChEBI" id="CHEBI:15378"/>
        <dbReference type="ChEBI" id="CHEBI:17748"/>
        <dbReference type="ChEBI" id="CHEBI:30616"/>
        <dbReference type="ChEBI" id="CHEBI:63528"/>
        <dbReference type="ChEBI" id="CHEBI:456216"/>
        <dbReference type="EC" id="2.7.1.21"/>
    </reaction>
</comment>
<comment type="subunit">
    <text evidence="1">Homotetramer.</text>
</comment>
<comment type="subcellular location">
    <subcellularLocation>
        <location evidence="1">Cytoplasm</location>
    </subcellularLocation>
</comment>
<comment type="similarity">
    <text evidence="1">Belongs to the thymidine kinase family.</text>
</comment>
<dbReference type="EC" id="2.7.1.21" evidence="1"/>
<dbReference type="EMBL" id="CP000804">
    <property type="protein sequence ID" value="ABU57179.1"/>
    <property type="molecule type" value="Genomic_DNA"/>
</dbReference>
<dbReference type="RefSeq" id="WP_012119609.1">
    <property type="nucleotide sequence ID" value="NC_009767.1"/>
</dbReference>
<dbReference type="SMR" id="A7NI79"/>
<dbReference type="STRING" id="383372.Rcas_1079"/>
<dbReference type="KEGG" id="rca:Rcas_1079"/>
<dbReference type="eggNOG" id="COG1435">
    <property type="taxonomic scope" value="Bacteria"/>
</dbReference>
<dbReference type="HOGENOM" id="CLU_064400_3_0_0"/>
<dbReference type="OrthoDB" id="9781579at2"/>
<dbReference type="Proteomes" id="UP000000263">
    <property type="component" value="Chromosome"/>
</dbReference>
<dbReference type="GO" id="GO:0005829">
    <property type="term" value="C:cytosol"/>
    <property type="evidence" value="ECO:0007669"/>
    <property type="project" value="TreeGrafter"/>
</dbReference>
<dbReference type="GO" id="GO:0005524">
    <property type="term" value="F:ATP binding"/>
    <property type="evidence" value="ECO:0007669"/>
    <property type="project" value="UniProtKB-UniRule"/>
</dbReference>
<dbReference type="GO" id="GO:0004797">
    <property type="term" value="F:thymidine kinase activity"/>
    <property type="evidence" value="ECO:0007669"/>
    <property type="project" value="UniProtKB-UniRule"/>
</dbReference>
<dbReference type="GO" id="GO:0008270">
    <property type="term" value="F:zinc ion binding"/>
    <property type="evidence" value="ECO:0007669"/>
    <property type="project" value="UniProtKB-UniRule"/>
</dbReference>
<dbReference type="GO" id="GO:0071897">
    <property type="term" value="P:DNA biosynthetic process"/>
    <property type="evidence" value="ECO:0007669"/>
    <property type="project" value="UniProtKB-KW"/>
</dbReference>
<dbReference type="GO" id="GO:0046104">
    <property type="term" value="P:thymidine metabolic process"/>
    <property type="evidence" value="ECO:0007669"/>
    <property type="project" value="TreeGrafter"/>
</dbReference>
<dbReference type="Gene3D" id="3.30.60.20">
    <property type="match status" value="1"/>
</dbReference>
<dbReference type="Gene3D" id="3.40.50.300">
    <property type="entry name" value="P-loop containing nucleotide triphosphate hydrolases"/>
    <property type="match status" value="1"/>
</dbReference>
<dbReference type="HAMAP" id="MF_00124">
    <property type="entry name" value="Thymidine_kinase"/>
    <property type="match status" value="1"/>
</dbReference>
<dbReference type="InterPro" id="IPR027417">
    <property type="entry name" value="P-loop_NTPase"/>
</dbReference>
<dbReference type="InterPro" id="IPR001267">
    <property type="entry name" value="Thymidine_kinase"/>
</dbReference>
<dbReference type="InterPro" id="IPR020633">
    <property type="entry name" value="Thymidine_kinase_CS"/>
</dbReference>
<dbReference type="NCBIfam" id="NF003296">
    <property type="entry name" value="PRK04296.1-1"/>
    <property type="match status" value="1"/>
</dbReference>
<dbReference type="PANTHER" id="PTHR11441">
    <property type="entry name" value="THYMIDINE KINASE"/>
    <property type="match status" value="1"/>
</dbReference>
<dbReference type="PANTHER" id="PTHR11441:SF0">
    <property type="entry name" value="THYMIDINE KINASE, CYTOSOLIC"/>
    <property type="match status" value="1"/>
</dbReference>
<dbReference type="Pfam" id="PF00265">
    <property type="entry name" value="TK"/>
    <property type="match status" value="1"/>
</dbReference>
<dbReference type="PIRSF" id="PIRSF035805">
    <property type="entry name" value="TK_cell"/>
    <property type="match status" value="1"/>
</dbReference>
<dbReference type="SUPFAM" id="SSF57716">
    <property type="entry name" value="Glucocorticoid receptor-like (DNA-binding domain)"/>
    <property type="match status" value="1"/>
</dbReference>
<dbReference type="SUPFAM" id="SSF52540">
    <property type="entry name" value="P-loop containing nucleoside triphosphate hydrolases"/>
    <property type="match status" value="1"/>
</dbReference>
<dbReference type="PROSITE" id="PS00603">
    <property type="entry name" value="TK_CELLULAR_TYPE"/>
    <property type="match status" value="1"/>
</dbReference>
<gene>
    <name evidence="1" type="primary">tdk</name>
    <name type="ordered locus">Rcas_1079</name>
</gene>
<reference key="1">
    <citation type="submission" date="2007-08" db="EMBL/GenBank/DDBJ databases">
        <title>Complete sequence of Roseiflexus castenholzii DSM 13941.</title>
        <authorList>
            <consortium name="US DOE Joint Genome Institute"/>
            <person name="Copeland A."/>
            <person name="Lucas S."/>
            <person name="Lapidus A."/>
            <person name="Barry K."/>
            <person name="Glavina del Rio T."/>
            <person name="Dalin E."/>
            <person name="Tice H."/>
            <person name="Pitluck S."/>
            <person name="Thompson L.S."/>
            <person name="Brettin T."/>
            <person name="Bruce D."/>
            <person name="Detter J.C."/>
            <person name="Han C."/>
            <person name="Tapia R."/>
            <person name="Schmutz J."/>
            <person name="Larimer F."/>
            <person name="Land M."/>
            <person name="Hauser L."/>
            <person name="Kyrpides N."/>
            <person name="Mikhailova N."/>
            <person name="Bryant D.A."/>
            <person name="Hanada S."/>
            <person name="Tsukatani Y."/>
            <person name="Richardson P."/>
        </authorList>
    </citation>
    <scope>NUCLEOTIDE SEQUENCE [LARGE SCALE GENOMIC DNA]</scope>
    <source>
        <strain>DSM 13941 / HLO8</strain>
    </source>
</reference>
<protein>
    <recommendedName>
        <fullName evidence="1">Thymidine kinase</fullName>
        <ecNumber evidence="1">2.7.1.21</ecNumber>
    </recommendedName>
</protein>
<evidence type="ECO:0000255" key="1">
    <source>
        <dbReference type="HAMAP-Rule" id="MF_00124"/>
    </source>
</evidence>
<feature type="chain" id="PRO_1000076239" description="Thymidine kinase">
    <location>
        <begin position="1"/>
        <end position="194"/>
    </location>
</feature>
<feature type="active site" description="Proton acceptor" evidence="1">
    <location>
        <position position="89"/>
    </location>
</feature>
<feature type="binding site" evidence="1">
    <location>
        <begin position="15"/>
        <end position="22"/>
    </location>
    <ligand>
        <name>ATP</name>
        <dbReference type="ChEBI" id="CHEBI:30616"/>
    </ligand>
</feature>
<feature type="binding site" evidence="1">
    <location>
        <begin position="88"/>
        <end position="91"/>
    </location>
    <ligand>
        <name>ATP</name>
        <dbReference type="ChEBI" id="CHEBI:30616"/>
    </ligand>
</feature>
<feature type="binding site" evidence="1">
    <location>
        <position position="148"/>
    </location>
    <ligand>
        <name>Zn(2+)</name>
        <dbReference type="ChEBI" id="CHEBI:29105"/>
    </ligand>
</feature>
<feature type="binding site" evidence="1">
    <location>
        <position position="151"/>
    </location>
    <ligand>
        <name>Zn(2+)</name>
        <dbReference type="ChEBI" id="CHEBI:29105"/>
    </ligand>
</feature>
<feature type="binding site" evidence="1">
    <location>
        <position position="186"/>
    </location>
    <ligand>
        <name>Zn(2+)</name>
        <dbReference type="ChEBI" id="CHEBI:29105"/>
    </ligand>
</feature>
<feature type="binding site" evidence="1">
    <location>
        <position position="189"/>
    </location>
    <ligand>
        <name>Zn(2+)</name>
        <dbReference type="ChEBI" id="CHEBI:29105"/>
    </ligand>
</feature>
<accession>A7NI79</accession>
<keyword id="KW-0067">ATP-binding</keyword>
<keyword id="KW-0963">Cytoplasm</keyword>
<keyword id="KW-0237">DNA synthesis</keyword>
<keyword id="KW-0418">Kinase</keyword>
<keyword id="KW-0479">Metal-binding</keyword>
<keyword id="KW-0547">Nucleotide-binding</keyword>
<keyword id="KW-1185">Reference proteome</keyword>
<keyword id="KW-0808">Transferase</keyword>
<keyword id="KW-0862">Zinc</keyword>
<name>KITH_ROSCS</name>
<organism>
    <name type="scientific">Roseiflexus castenholzii (strain DSM 13941 / HLO8)</name>
    <dbReference type="NCBI Taxonomy" id="383372"/>
    <lineage>
        <taxon>Bacteria</taxon>
        <taxon>Bacillati</taxon>
        <taxon>Chloroflexota</taxon>
        <taxon>Chloroflexia</taxon>
        <taxon>Chloroflexales</taxon>
        <taxon>Roseiflexineae</taxon>
        <taxon>Roseiflexaceae</taxon>
        <taxon>Roseiflexus</taxon>
    </lineage>
</organism>